<keyword id="KW-0687">Ribonucleoprotein</keyword>
<keyword id="KW-0689">Ribosomal protein</keyword>
<keyword id="KW-0694">RNA-binding</keyword>
<keyword id="KW-0699">rRNA-binding</keyword>
<feature type="chain" id="PRO_0000154706" description="Large ribosomal subunit protein uL10">
    <location>
        <begin position="1"/>
        <end position="166"/>
    </location>
</feature>
<gene>
    <name evidence="1" type="primary">rplJ</name>
    <name type="ordered locus">SAV0539</name>
</gene>
<accession>P66048</accession>
<accession>Q99W67</accession>
<dbReference type="EMBL" id="BA000017">
    <property type="protein sequence ID" value="BAB56701.1"/>
    <property type="molecule type" value="Genomic_DNA"/>
</dbReference>
<dbReference type="RefSeq" id="WP_001273085.1">
    <property type="nucleotide sequence ID" value="NC_002758.2"/>
</dbReference>
<dbReference type="SMR" id="P66048"/>
<dbReference type="KEGG" id="sav:SAV0539"/>
<dbReference type="HOGENOM" id="CLU_092227_2_0_9"/>
<dbReference type="PhylomeDB" id="P66048"/>
<dbReference type="Proteomes" id="UP000002481">
    <property type="component" value="Chromosome"/>
</dbReference>
<dbReference type="GO" id="GO:0015934">
    <property type="term" value="C:large ribosomal subunit"/>
    <property type="evidence" value="ECO:0007669"/>
    <property type="project" value="InterPro"/>
</dbReference>
<dbReference type="GO" id="GO:0070180">
    <property type="term" value="F:large ribosomal subunit rRNA binding"/>
    <property type="evidence" value="ECO:0007669"/>
    <property type="project" value="UniProtKB-UniRule"/>
</dbReference>
<dbReference type="GO" id="GO:0003735">
    <property type="term" value="F:structural constituent of ribosome"/>
    <property type="evidence" value="ECO:0007669"/>
    <property type="project" value="InterPro"/>
</dbReference>
<dbReference type="GO" id="GO:0006412">
    <property type="term" value="P:translation"/>
    <property type="evidence" value="ECO:0007669"/>
    <property type="project" value="UniProtKB-UniRule"/>
</dbReference>
<dbReference type="CDD" id="cd05797">
    <property type="entry name" value="Ribosomal_L10"/>
    <property type="match status" value="1"/>
</dbReference>
<dbReference type="FunFam" id="3.30.70.1730:FF:000001">
    <property type="entry name" value="50S ribosomal protein L10"/>
    <property type="match status" value="1"/>
</dbReference>
<dbReference type="Gene3D" id="3.30.70.1730">
    <property type="match status" value="1"/>
</dbReference>
<dbReference type="Gene3D" id="6.10.250.290">
    <property type="match status" value="1"/>
</dbReference>
<dbReference type="HAMAP" id="MF_00362">
    <property type="entry name" value="Ribosomal_uL10"/>
    <property type="match status" value="1"/>
</dbReference>
<dbReference type="InterPro" id="IPR001790">
    <property type="entry name" value="Ribosomal_uL10"/>
</dbReference>
<dbReference type="InterPro" id="IPR043141">
    <property type="entry name" value="Ribosomal_uL10-like_sf"/>
</dbReference>
<dbReference type="InterPro" id="IPR022973">
    <property type="entry name" value="Ribosomal_uL10_bac"/>
</dbReference>
<dbReference type="InterPro" id="IPR047865">
    <property type="entry name" value="Ribosomal_uL10_bac_type"/>
</dbReference>
<dbReference type="InterPro" id="IPR002363">
    <property type="entry name" value="Ribosomal_uL10_CS_bac"/>
</dbReference>
<dbReference type="NCBIfam" id="NF000955">
    <property type="entry name" value="PRK00099.1-1"/>
    <property type="match status" value="1"/>
</dbReference>
<dbReference type="PANTHER" id="PTHR11560">
    <property type="entry name" value="39S RIBOSOMAL PROTEIN L10, MITOCHONDRIAL"/>
    <property type="match status" value="1"/>
</dbReference>
<dbReference type="Pfam" id="PF00466">
    <property type="entry name" value="Ribosomal_L10"/>
    <property type="match status" value="1"/>
</dbReference>
<dbReference type="SUPFAM" id="SSF160369">
    <property type="entry name" value="Ribosomal protein L10-like"/>
    <property type="match status" value="1"/>
</dbReference>
<dbReference type="PROSITE" id="PS01109">
    <property type="entry name" value="RIBOSOMAL_L10"/>
    <property type="match status" value="1"/>
</dbReference>
<reference key="1">
    <citation type="journal article" date="2001" name="Lancet">
        <title>Whole genome sequencing of meticillin-resistant Staphylococcus aureus.</title>
        <authorList>
            <person name="Kuroda M."/>
            <person name="Ohta T."/>
            <person name="Uchiyama I."/>
            <person name="Baba T."/>
            <person name="Yuzawa H."/>
            <person name="Kobayashi I."/>
            <person name="Cui L."/>
            <person name="Oguchi A."/>
            <person name="Aoki K."/>
            <person name="Nagai Y."/>
            <person name="Lian J.-Q."/>
            <person name="Ito T."/>
            <person name="Kanamori M."/>
            <person name="Matsumaru H."/>
            <person name="Maruyama A."/>
            <person name="Murakami H."/>
            <person name="Hosoyama A."/>
            <person name="Mizutani-Ui Y."/>
            <person name="Takahashi N.K."/>
            <person name="Sawano T."/>
            <person name="Inoue R."/>
            <person name="Kaito C."/>
            <person name="Sekimizu K."/>
            <person name="Hirakawa H."/>
            <person name="Kuhara S."/>
            <person name="Goto S."/>
            <person name="Yabuzaki J."/>
            <person name="Kanehisa M."/>
            <person name="Yamashita A."/>
            <person name="Oshima K."/>
            <person name="Furuya K."/>
            <person name="Yoshino C."/>
            <person name="Shiba T."/>
            <person name="Hattori M."/>
            <person name="Ogasawara N."/>
            <person name="Hayashi H."/>
            <person name="Hiramatsu K."/>
        </authorList>
    </citation>
    <scope>NUCLEOTIDE SEQUENCE [LARGE SCALE GENOMIC DNA]</scope>
    <source>
        <strain>Mu50 / ATCC 700699</strain>
    </source>
</reference>
<proteinExistence type="inferred from homology"/>
<protein>
    <recommendedName>
        <fullName evidence="1">Large ribosomal subunit protein uL10</fullName>
    </recommendedName>
    <alternativeName>
        <fullName evidence="2">50S ribosomal protein L10</fullName>
    </alternativeName>
</protein>
<comment type="function">
    <text evidence="1">Forms part of the ribosomal stalk, playing a central role in the interaction of the ribosome with GTP-bound translation factors.</text>
</comment>
<comment type="subunit">
    <text evidence="1">Part of the ribosomal stalk of the 50S ribosomal subunit. The N-terminus interacts with L11 and the large rRNA to form the base of the stalk. The C-terminus forms an elongated spine to which L12 dimers bind in a sequential fashion forming a multimeric L10(L12)X complex.</text>
</comment>
<comment type="similarity">
    <text evidence="1">Belongs to the universal ribosomal protein uL10 family.</text>
</comment>
<evidence type="ECO:0000255" key="1">
    <source>
        <dbReference type="HAMAP-Rule" id="MF_00362"/>
    </source>
</evidence>
<evidence type="ECO:0000305" key="2"/>
<organism>
    <name type="scientific">Staphylococcus aureus (strain Mu50 / ATCC 700699)</name>
    <dbReference type="NCBI Taxonomy" id="158878"/>
    <lineage>
        <taxon>Bacteria</taxon>
        <taxon>Bacillati</taxon>
        <taxon>Bacillota</taxon>
        <taxon>Bacilli</taxon>
        <taxon>Bacillales</taxon>
        <taxon>Staphylococcaceae</taxon>
        <taxon>Staphylococcus</taxon>
    </lineage>
</organism>
<name>RL10_STAAM</name>
<sequence>MSAIIEAKKQLVDEIAEVLSNSVSTVIVDYRGLTVAEVTDLRSQLREAGVEYKVYKNTMVRRAAEKAGIEGLDEFLTGPTAIATSSEDAVAAAKVISGFAKDHEALEIKSGVMEGNVITAEEVKTVGSLPSHDGLVSMLLSVLQAPVRNFAYAVKAIGEQKEENAE</sequence>